<proteinExistence type="evidence at protein level"/>
<gene>
    <name evidence="8" type="ORF">EAG_01033</name>
</gene>
<protein>
    <recommendedName>
        <fullName evidence="7">BRISC complex subunit FAM175B</fullName>
    </recommendedName>
    <alternativeName>
        <fullName evidence="7">BRISC complex subunit KIAA0157 homolog</fullName>
    </alternativeName>
</protein>
<comment type="function">
    <text evidence="1 2 6">Component of the BRISC complex that specifically cleaves 'Lys-63'-linked polyubiquitin, leaving the last ubiquitin chain attached to its substrates (PubMed:26344097). Does not have activity by itself, but the catalytic subunit BRCC3/BRCC36 needs to be associated into a heterotetramer with FAM175B for minimal in vitro activity (PubMed:26344097). May act as a central scaffold protein that assembles the various components of the BRISC complex and retains them in the cytoplasm (By similarity). Plays a role in regulating the onset of apoptosis via its role in modulating 'Lys-63'-linked ubiquitination of target proteins (By similarity). Required for normal mitotic spindle assembly and microtubule attachment to kinetochores via its role in deubiquitinating numa1 (By similarity).</text>
</comment>
<comment type="subunit">
    <text evidence="6">Component of the BRISC complex, at least composed of FAM175B/ABRO1, BRCC3/BRCC36, BABAM2 and BABAM1/NBA1. Within the complex, interacts directly with BRCC3/BRCC36. The heterodimer with BRCC3/BRCC36 assembles into a heterotetramer. The BRISC complex binds polyubiquitin.</text>
</comment>
<comment type="subcellular location">
    <subcellularLocation>
        <location evidence="1">Cytoplasm</location>
    </subcellularLocation>
    <subcellularLocation>
        <location evidence="1">Nucleus</location>
    </subcellularLocation>
    <subcellularLocation>
        <location evidence="1">Cytoplasm</location>
        <location evidence="1">Cytoskeleton</location>
        <location evidence="1">Spindle pole</location>
    </subcellularLocation>
    <subcellularLocation>
        <location evidence="1">Cytoplasm</location>
        <location evidence="1">Cytoskeleton</location>
    </subcellularLocation>
    <text evidence="1">A minor proportion is detected in the nucleus. Translocates into the nucleus in response to DNA damage. Directly binds to microtubules and is detected at the minus end of K-fibers.</text>
</comment>
<comment type="similarity">
    <text evidence="7">Belongs to the FAM175 family. Abro1 subfamily.</text>
</comment>
<comment type="caution">
    <text>Expected to lack catalytic activity.</text>
</comment>
<evidence type="ECO:0000250" key="1">
    <source>
        <dbReference type="UniProtKB" id="Q15018"/>
    </source>
</evidence>
<evidence type="ECO:0000250" key="2">
    <source>
        <dbReference type="UniProtKB" id="Q3TCJ1"/>
    </source>
</evidence>
<evidence type="ECO:0000255" key="3"/>
<evidence type="ECO:0000255" key="4">
    <source>
        <dbReference type="PROSITE-ProRule" id="PRU01182"/>
    </source>
</evidence>
<evidence type="ECO:0000256" key="5">
    <source>
        <dbReference type="SAM" id="MobiDB-lite"/>
    </source>
</evidence>
<evidence type="ECO:0000269" key="6">
    <source>
    </source>
</evidence>
<evidence type="ECO:0000305" key="7"/>
<evidence type="ECO:0000312" key="8">
    <source>
        <dbReference type="EMBL" id="EFN69293.1"/>
    </source>
</evidence>
<evidence type="ECO:0007744" key="9">
    <source>
        <dbReference type="PDB" id="5CW3"/>
    </source>
</evidence>
<evidence type="ECO:0007744" key="10">
    <source>
        <dbReference type="PDB" id="5CW4"/>
    </source>
</evidence>
<evidence type="ECO:0007744" key="11">
    <source>
        <dbReference type="PDB" id="5CW5"/>
    </source>
</evidence>
<evidence type="ECO:0007829" key="12">
    <source>
        <dbReference type="PDB" id="5CW3"/>
    </source>
</evidence>
<evidence type="ECO:0007829" key="13">
    <source>
        <dbReference type="PDB" id="5CW4"/>
    </source>
</evidence>
<reference evidence="8" key="1">
    <citation type="journal article" date="2010" name="Science">
        <title>Genomic comparison of the ants Camponotus floridanus and Harpegnathos saltator.</title>
        <authorList>
            <person name="Bonasio R."/>
            <person name="Zhang G."/>
            <person name="Ye C."/>
            <person name="Mutti N.S."/>
            <person name="Fang X."/>
            <person name="Qin N."/>
            <person name="Donahue G."/>
            <person name="Yang P."/>
            <person name="Li Q."/>
            <person name="Li C."/>
            <person name="Zhang P."/>
            <person name="Huang Z."/>
            <person name="Berger S.L."/>
            <person name="Reinberg D."/>
            <person name="Wang J."/>
            <person name="Liebig J."/>
        </authorList>
    </citation>
    <scope>NUCLEOTIDE SEQUENCE [LARGE SCALE GENOMIC DNA]</scope>
</reference>
<reference evidence="9 10 11" key="2">
    <citation type="journal article" date="2015" name="Mol. Cell">
        <title>Higher-order assembly of BRCC36-KIAA0157 is required for DUB activity and biological function.</title>
        <authorList>
            <person name="Zeqiraj E."/>
            <person name="Tian L."/>
            <person name="Piggott C.A."/>
            <person name="Pillon M.C."/>
            <person name="Duffy N.M."/>
            <person name="Ceccarelli D.F."/>
            <person name="Keszei A.F."/>
            <person name="Lorenzen K."/>
            <person name="Kurinov I."/>
            <person name="Orlicky S."/>
            <person name="Gish G.D."/>
            <person name="Heck A.J."/>
            <person name="Guarne A."/>
            <person name="Greenberg R.A."/>
            <person name="Sicheri F."/>
        </authorList>
    </citation>
    <scope>X-RAY CRYSTALLOGRAPHY (2.54 ANGSTROMS) OF 1-289 IN COMPLEX WITH BRCC3</scope>
    <scope>IDENTIFICATION IN THE BRISC COMPLEX</scope>
    <scope>INTERACTION WITH BRCC3</scope>
    <scope>SUBUNIT</scope>
    <scope>MUTAGENESIS OF ASN-177</scope>
</reference>
<dbReference type="EMBL" id="GL438234">
    <property type="protein sequence ID" value="EFN69293.1"/>
    <property type="molecule type" value="Genomic_DNA"/>
</dbReference>
<dbReference type="PDB" id="5CW3">
    <property type="method" value="X-ray"/>
    <property type="resolution" value="2.55 A"/>
    <property type="chains" value="B/D=1-289"/>
</dbReference>
<dbReference type="PDB" id="5CW4">
    <property type="method" value="X-ray"/>
    <property type="resolution" value="2.54 A"/>
    <property type="chains" value="B/D=1-289"/>
</dbReference>
<dbReference type="PDB" id="5CW5">
    <property type="method" value="X-ray"/>
    <property type="resolution" value="2.74 A"/>
    <property type="chains" value="B/D=1-289"/>
</dbReference>
<dbReference type="PDBsum" id="5CW3"/>
<dbReference type="PDBsum" id="5CW4"/>
<dbReference type="PDBsum" id="5CW5"/>
<dbReference type="SMR" id="E2AB17"/>
<dbReference type="STRING" id="104421.E2AB17"/>
<dbReference type="EnsemblMetazoa" id="XM_011256429.3">
    <property type="protein sequence ID" value="XP_011254731.1"/>
    <property type="gene ID" value="LOC105250379"/>
</dbReference>
<dbReference type="EnsemblMetazoa" id="XM_020027287.2">
    <property type="protein sequence ID" value="XP_019882846.1"/>
    <property type="gene ID" value="LOC105250379"/>
</dbReference>
<dbReference type="KEGG" id="cfo:105250379"/>
<dbReference type="OMA" id="YRMSSAG"/>
<dbReference type="OrthoDB" id="6358435at2759"/>
<dbReference type="EvolutionaryTrace" id="E2AB17"/>
<dbReference type="Proteomes" id="UP000000311">
    <property type="component" value="Unassembled WGS sequence"/>
</dbReference>
<dbReference type="GO" id="GO:0005737">
    <property type="term" value="C:cytoplasm"/>
    <property type="evidence" value="ECO:0007669"/>
    <property type="project" value="UniProtKB-SubCell"/>
</dbReference>
<dbReference type="GO" id="GO:0005634">
    <property type="term" value="C:nucleus"/>
    <property type="evidence" value="ECO:0007669"/>
    <property type="project" value="UniProtKB-SubCell"/>
</dbReference>
<dbReference type="GO" id="GO:0000922">
    <property type="term" value="C:spindle pole"/>
    <property type="evidence" value="ECO:0007669"/>
    <property type="project" value="UniProtKB-SubCell"/>
</dbReference>
<dbReference type="GO" id="GO:0008017">
    <property type="term" value="F:microtubule binding"/>
    <property type="evidence" value="ECO:0007669"/>
    <property type="project" value="TreeGrafter"/>
</dbReference>
<dbReference type="GO" id="GO:0031593">
    <property type="term" value="F:polyubiquitin modification-dependent protein binding"/>
    <property type="evidence" value="ECO:0007669"/>
    <property type="project" value="TreeGrafter"/>
</dbReference>
<dbReference type="GO" id="GO:0008608">
    <property type="term" value="P:attachment of spindle microtubules to kinetochore"/>
    <property type="evidence" value="ECO:0007669"/>
    <property type="project" value="TreeGrafter"/>
</dbReference>
<dbReference type="GO" id="GO:0051301">
    <property type="term" value="P:cell division"/>
    <property type="evidence" value="ECO:0007669"/>
    <property type="project" value="UniProtKB-KW"/>
</dbReference>
<dbReference type="GO" id="GO:0090307">
    <property type="term" value="P:mitotic spindle assembly"/>
    <property type="evidence" value="ECO:0007669"/>
    <property type="project" value="TreeGrafter"/>
</dbReference>
<dbReference type="GO" id="GO:0070536">
    <property type="term" value="P:protein K63-linked deubiquitination"/>
    <property type="evidence" value="ECO:0007669"/>
    <property type="project" value="TreeGrafter"/>
</dbReference>
<dbReference type="CDD" id="cd23525">
    <property type="entry name" value="Abraxas_2_insects"/>
    <property type="match status" value="1"/>
</dbReference>
<dbReference type="InterPro" id="IPR055064">
    <property type="entry name" value="BRISC_FAM175B_helical"/>
</dbReference>
<dbReference type="InterPro" id="IPR023238">
    <property type="entry name" value="FAM175"/>
</dbReference>
<dbReference type="InterPro" id="IPR037518">
    <property type="entry name" value="MPN"/>
</dbReference>
<dbReference type="PANTHER" id="PTHR31728">
    <property type="entry name" value="ABRAXAS FAMILY MEMBER"/>
    <property type="match status" value="1"/>
</dbReference>
<dbReference type="PANTHER" id="PTHR31728:SF5">
    <property type="entry name" value="OS07G0540200 PROTEIN"/>
    <property type="match status" value="1"/>
</dbReference>
<dbReference type="Pfam" id="PF22299">
    <property type="entry name" value="BRISC_FAM175B_helical"/>
    <property type="match status" value="1"/>
</dbReference>
<dbReference type="Pfam" id="PF21125">
    <property type="entry name" value="MPN_2A_DUB_like"/>
    <property type="match status" value="1"/>
</dbReference>
<dbReference type="PRINTS" id="PR02051">
    <property type="entry name" value="PROTEINF175"/>
</dbReference>
<dbReference type="PROSITE" id="PS50249">
    <property type="entry name" value="MPN"/>
    <property type="match status" value="1"/>
</dbReference>
<keyword id="KW-0002">3D-structure</keyword>
<keyword id="KW-0131">Cell cycle</keyword>
<keyword id="KW-0132">Cell division</keyword>
<keyword id="KW-0175">Coiled coil</keyword>
<keyword id="KW-0963">Cytoplasm</keyword>
<keyword id="KW-0206">Cytoskeleton</keyword>
<keyword id="KW-0498">Mitosis</keyword>
<keyword id="KW-0539">Nucleus</keyword>
<keyword id="KW-1185">Reference proteome</keyword>
<keyword id="KW-0833">Ubl conjugation pathway</keyword>
<name>F175B_CAMFO</name>
<organism>
    <name type="scientific">Camponotus floridanus</name>
    <name type="common">Florida carpenter ant</name>
    <dbReference type="NCBI Taxonomy" id="104421"/>
    <lineage>
        <taxon>Eukaryota</taxon>
        <taxon>Metazoa</taxon>
        <taxon>Ecdysozoa</taxon>
        <taxon>Arthropoda</taxon>
        <taxon>Hexapoda</taxon>
        <taxon>Insecta</taxon>
        <taxon>Pterygota</taxon>
        <taxon>Neoptera</taxon>
        <taxon>Endopterygota</taxon>
        <taxon>Hymenoptera</taxon>
        <taxon>Apocrita</taxon>
        <taxon>Aculeata</taxon>
        <taxon>Formicoidea</taxon>
        <taxon>Formicidae</taxon>
        <taxon>Formicinae</taxon>
        <taxon>Camponotus</taxon>
    </lineage>
</organism>
<accession>E2AB17</accession>
<feature type="chain" id="PRO_0000435529" description="BRISC complex subunit FAM175B">
    <location>
        <begin position="1"/>
        <end position="471"/>
    </location>
</feature>
<feature type="domain" description="MPN" evidence="4">
    <location>
        <begin position="7"/>
        <end position="161"/>
    </location>
</feature>
<feature type="region of interest" description="Disordered" evidence="5">
    <location>
        <begin position="343"/>
        <end position="445"/>
    </location>
</feature>
<feature type="coiled-coil region" evidence="3">
    <location>
        <begin position="245"/>
        <end position="272"/>
    </location>
</feature>
<feature type="compositionally biased region" description="Low complexity" evidence="5">
    <location>
        <begin position="359"/>
        <end position="370"/>
    </location>
</feature>
<feature type="mutagenesis site" description="Strongly reduces deubiquitination by the BRISC complex." evidence="6">
    <original>N</original>
    <variation>R</variation>
    <location>
        <position position="177"/>
    </location>
</feature>
<feature type="strand" evidence="13">
    <location>
        <begin position="5"/>
        <end position="11"/>
    </location>
</feature>
<feature type="helix" evidence="13">
    <location>
        <begin position="12"/>
        <end position="24"/>
    </location>
</feature>
<feature type="strand" evidence="13">
    <location>
        <begin position="25"/>
        <end position="27"/>
    </location>
</feature>
<feature type="strand" evidence="13">
    <location>
        <begin position="29"/>
        <end position="41"/>
    </location>
</feature>
<feature type="strand" evidence="13">
    <location>
        <begin position="55"/>
        <end position="66"/>
    </location>
</feature>
<feature type="helix" evidence="13">
    <location>
        <begin position="69"/>
        <end position="71"/>
    </location>
</feature>
<feature type="strand" evidence="12">
    <location>
        <begin position="75"/>
        <end position="77"/>
    </location>
</feature>
<feature type="helix" evidence="13">
    <location>
        <begin position="82"/>
        <end position="89"/>
    </location>
</feature>
<feature type="helix" evidence="13">
    <location>
        <begin position="93"/>
        <end position="95"/>
    </location>
</feature>
<feature type="strand" evidence="13">
    <location>
        <begin position="96"/>
        <end position="105"/>
    </location>
</feature>
<feature type="helix" evidence="13">
    <location>
        <begin position="113"/>
        <end position="129"/>
    </location>
</feature>
<feature type="helix" evidence="12">
    <location>
        <begin position="134"/>
        <end position="136"/>
    </location>
</feature>
<feature type="strand" evidence="13">
    <location>
        <begin position="138"/>
        <end position="146"/>
    </location>
</feature>
<feature type="strand" evidence="13">
    <location>
        <begin position="152"/>
        <end position="162"/>
    </location>
</feature>
<feature type="strand" evidence="13">
    <location>
        <begin position="168"/>
        <end position="171"/>
    </location>
</feature>
<feature type="strand" evidence="13">
    <location>
        <begin position="173"/>
        <end position="176"/>
    </location>
</feature>
<feature type="helix" evidence="13">
    <location>
        <begin position="205"/>
        <end position="211"/>
    </location>
</feature>
<feature type="helix" evidence="13">
    <location>
        <begin position="224"/>
        <end position="270"/>
    </location>
</feature>
<sequence>MADSDLLVTISGAALSLLFFENVRSVGNQMGFLLGEALEFIVKTYTDSDNQVETVKIHINVEAIVTCPLADLLHDSTNHINKEKLKDFVRDKSKQVIGWFCFRRNTTNLTLTLKDKLLHKQFASHFSGVNGCKEDFFLTCLLNASTSETSGTHKFRHVFLRHNKRGMFEPISLKINNLGDDASRHDGSDYKPTPVRKSTRTPDSFTKLIESLNLDVARIDGLDSAMLIQKAAEHHLMSLIPKVCESDLEVAELEKQVHELKIKIATQQLAKRLKINGENCDRISKASKDNCFSEKIDSSKKNEVRIGDDACLQREHIPSCTQSVGPNNRTVCRNTAACIAKSAEKSRRAGRSNLQESGNQQQETQNFFTNSRRSIPEIATESICQEGSEISMGRGRGSGRGSHEFTPGMKKIRRTPGTSHMHSSRERSTTPPEQDFSDAECPISSPVLRSYSQVTKKTNLDKCNSMAPLDI</sequence>